<comment type="function">
    <text evidence="7">After binding acetylcholine, the AChR responds by an extensive change in conformation that affects all subunits and leads to opening of an ion-conducting channel across the plasma membrane.</text>
</comment>
<comment type="catalytic activity">
    <reaction evidence="2">
        <text>K(+)(in) = K(+)(out)</text>
        <dbReference type="Rhea" id="RHEA:29463"/>
        <dbReference type="ChEBI" id="CHEBI:29103"/>
    </reaction>
</comment>
<comment type="catalytic activity">
    <reaction evidence="2">
        <text>Na(+)(in) = Na(+)(out)</text>
        <dbReference type="Rhea" id="RHEA:34963"/>
        <dbReference type="ChEBI" id="CHEBI:29101"/>
    </reaction>
</comment>
<comment type="subunit">
    <text evidence="6">Pentamer of two alpha chains, and one each of the beta, delta, and gamma (in immature muscle) or epsilon (in mature muscle) chains. The muscle heteropentamer composed of alpha-1, beta-1, delta, epsilon subunits interacts with the alpha-conotoxin ImII (PubMed:15609996).</text>
</comment>
<comment type="interaction">
    <interactant intactId="EBI-724218">
        <id>P11230</id>
    </interactant>
    <interactant intactId="EBI-6425205">
        <id>Q9NWX5</id>
        <label>ASB6</label>
    </interactant>
    <organismsDiffer>false</organismsDiffer>
    <experiments>3</experiments>
</comment>
<comment type="subcellular location">
    <subcellularLocation>
        <location>Postsynaptic cell membrane</location>
        <topology>Multi-pass membrane protein</topology>
    </subcellularLocation>
    <subcellularLocation>
        <location>Cell membrane</location>
        <topology>Multi-pass membrane protein</topology>
    </subcellularLocation>
</comment>
<comment type="alternative products">
    <event type="alternative splicing"/>
    <isoform>
        <id>P11230-1</id>
        <name>1</name>
        <sequence type="displayed"/>
    </isoform>
    <isoform>
        <id>P11230-2</id>
        <name>2</name>
        <sequence type="described" ref="VSP_056675"/>
    </isoform>
</comment>
<comment type="disease" evidence="7 8 9">
    <disease id="DI-04393">
        <name>Myasthenic syndrome, congenital, 2A, slow-channel</name>
        <acronym>CMS2A</acronym>
        <description>A form of congenital myasthenic syndrome, a group of disorders characterized by failure of neuromuscular transmission, including pre-synaptic, synaptic, and post-synaptic disorders that are not of autoimmune origin. Clinical features are easy fatigability and muscle weakness affecting the axial and limb muscles (with hypotonia in early-onset forms), the ocular muscles (leading to ptosis and ophthalmoplegia), and the facial and bulbar musculature (affecting sucking and swallowing, and leading to dysphonia). The symptoms fluctuate and worsen with physical effort. CMS2A is a slow-channel myasthenic syndrome. It is caused by kinetic abnormalities of the AChR, resulting in prolonged AChR channel opening episodes, prolonged endplate currents, and depolarization block. This is associated with calcium overload, which may contribute to subsequent degeneration of the endplate and postsynaptic membrane.</description>
        <dbReference type="MIM" id="616313"/>
    </disease>
    <text>The disease is caused by variants affecting the gene represented in this entry.</text>
</comment>
<comment type="disease" evidence="4">
    <disease id="DI-04398">
        <name>Myasthenic syndrome, congenital, 2C, associated with acetylcholine receptor deficiency</name>
        <acronym>CMS2C</acronym>
        <description>A form of congenital myasthenic syndrome, a group of disorders characterized by failure of neuromuscular transmission, including pre-synaptic, synaptic, and post-synaptic disorders that are not of autoimmune origin. Clinical features are easy fatigability and muscle weakness affecting the axial and limb muscles (with hypotonia in early-onset forms), the ocular muscles (leading to ptosis and ophthalmoplegia), and the facial and bulbar musculature (affecting sucking and swallowing, and leading to dysphonia). The symptoms fluctuate and worsen with physical effort. CMS2C is an autosomal recessive disorder of postsynaptic neuromuscular transmission, due to deficiency of AChR at the endplate that results in low amplitude of the miniature endplate potential and current. CMS2C is clinically characterized by early-onset muscle weakness with variable severity.</description>
        <dbReference type="MIM" id="616314"/>
    </disease>
    <text>The disease is caused by variants affecting the gene represented in this entry.</text>
</comment>
<comment type="similarity">
    <text evidence="11">Belongs to the ligand-gated ion channel (TC 1.A.9) family. Acetylcholine receptor (TC 1.A.9.1) subfamily. Beta-1/CHRNB1 sub-subfamily.</text>
</comment>
<gene>
    <name evidence="12" type="primary">CHRNB1</name>
    <name type="synonym">ACHRB</name>
    <name type="synonym">CHRNB</name>
</gene>
<reference key="1">
    <citation type="journal article" date="1989" name="Nucleic Acids Res.">
        <title>Nucleotide sequence of human muscle acetylcholine receptor beta-subunit.</title>
        <authorList>
            <person name="Beeson D.M.W."/>
            <person name="Brydson M."/>
            <person name="Newsom-Davis J."/>
        </authorList>
    </citation>
    <scope>NUCLEOTIDE SEQUENCE [MRNA] (ISOFORM 1)</scope>
</reference>
<reference key="2">
    <citation type="journal article" date="2004" name="Nat. Genet.">
        <title>Complete sequencing and characterization of 21,243 full-length human cDNAs.</title>
        <authorList>
            <person name="Ota T."/>
            <person name="Suzuki Y."/>
            <person name="Nishikawa T."/>
            <person name="Otsuki T."/>
            <person name="Sugiyama T."/>
            <person name="Irie R."/>
            <person name="Wakamatsu A."/>
            <person name="Hayashi K."/>
            <person name="Sato H."/>
            <person name="Nagai K."/>
            <person name="Kimura K."/>
            <person name="Makita H."/>
            <person name="Sekine M."/>
            <person name="Obayashi M."/>
            <person name="Nishi T."/>
            <person name="Shibahara T."/>
            <person name="Tanaka T."/>
            <person name="Ishii S."/>
            <person name="Yamamoto J."/>
            <person name="Saito K."/>
            <person name="Kawai Y."/>
            <person name="Isono Y."/>
            <person name="Nakamura Y."/>
            <person name="Nagahari K."/>
            <person name="Murakami K."/>
            <person name="Yasuda T."/>
            <person name="Iwayanagi T."/>
            <person name="Wagatsuma M."/>
            <person name="Shiratori A."/>
            <person name="Sudo H."/>
            <person name="Hosoiri T."/>
            <person name="Kaku Y."/>
            <person name="Kodaira H."/>
            <person name="Kondo H."/>
            <person name="Sugawara M."/>
            <person name="Takahashi M."/>
            <person name="Kanda K."/>
            <person name="Yokoi T."/>
            <person name="Furuya T."/>
            <person name="Kikkawa E."/>
            <person name="Omura Y."/>
            <person name="Abe K."/>
            <person name="Kamihara K."/>
            <person name="Katsuta N."/>
            <person name="Sato K."/>
            <person name="Tanikawa M."/>
            <person name="Yamazaki M."/>
            <person name="Ninomiya K."/>
            <person name="Ishibashi T."/>
            <person name="Yamashita H."/>
            <person name="Murakawa K."/>
            <person name="Fujimori K."/>
            <person name="Tanai H."/>
            <person name="Kimata M."/>
            <person name="Watanabe M."/>
            <person name="Hiraoka S."/>
            <person name="Chiba Y."/>
            <person name="Ishida S."/>
            <person name="Ono Y."/>
            <person name="Takiguchi S."/>
            <person name="Watanabe S."/>
            <person name="Yosida M."/>
            <person name="Hotuta T."/>
            <person name="Kusano J."/>
            <person name="Kanehori K."/>
            <person name="Takahashi-Fujii A."/>
            <person name="Hara H."/>
            <person name="Tanase T.-O."/>
            <person name="Nomura Y."/>
            <person name="Togiya S."/>
            <person name="Komai F."/>
            <person name="Hara R."/>
            <person name="Takeuchi K."/>
            <person name="Arita M."/>
            <person name="Imose N."/>
            <person name="Musashino K."/>
            <person name="Yuuki H."/>
            <person name="Oshima A."/>
            <person name="Sasaki N."/>
            <person name="Aotsuka S."/>
            <person name="Yoshikawa Y."/>
            <person name="Matsunawa H."/>
            <person name="Ichihara T."/>
            <person name="Shiohata N."/>
            <person name="Sano S."/>
            <person name="Moriya S."/>
            <person name="Momiyama H."/>
            <person name="Satoh N."/>
            <person name="Takami S."/>
            <person name="Terashima Y."/>
            <person name="Suzuki O."/>
            <person name="Nakagawa S."/>
            <person name="Senoh A."/>
            <person name="Mizoguchi H."/>
            <person name="Goto Y."/>
            <person name="Shimizu F."/>
            <person name="Wakebe H."/>
            <person name="Hishigaki H."/>
            <person name="Watanabe T."/>
            <person name="Sugiyama A."/>
            <person name="Takemoto M."/>
            <person name="Kawakami B."/>
            <person name="Yamazaki M."/>
            <person name="Watanabe K."/>
            <person name="Kumagai A."/>
            <person name="Itakura S."/>
            <person name="Fukuzumi Y."/>
            <person name="Fujimori Y."/>
            <person name="Komiyama M."/>
            <person name="Tashiro H."/>
            <person name="Tanigami A."/>
            <person name="Fujiwara T."/>
            <person name="Ono T."/>
            <person name="Yamada K."/>
            <person name="Fujii Y."/>
            <person name="Ozaki K."/>
            <person name="Hirao M."/>
            <person name="Ohmori Y."/>
            <person name="Kawabata A."/>
            <person name="Hikiji T."/>
            <person name="Kobatake N."/>
            <person name="Inagaki H."/>
            <person name="Ikema Y."/>
            <person name="Okamoto S."/>
            <person name="Okitani R."/>
            <person name="Kawakami T."/>
            <person name="Noguchi S."/>
            <person name="Itoh T."/>
            <person name="Shigeta K."/>
            <person name="Senba T."/>
            <person name="Matsumura K."/>
            <person name="Nakajima Y."/>
            <person name="Mizuno T."/>
            <person name="Morinaga M."/>
            <person name="Sasaki M."/>
            <person name="Togashi T."/>
            <person name="Oyama M."/>
            <person name="Hata H."/>
            <person name="Watanabe M."/>
            <person name="Komatsu T."/>
            <person name="Mizushima-Sugano J."/>
            <person name="Satoh T."/>
            <person name="Shirai Y."/>
            <person name="Takahashi Y."/>
            <person name="Nakagawa K."/>
            <person name="Okumura K."/>
            <person name="Nagase T."/>
            <person name="Nomura N."/>
            <person name="Kikuchi H."/>
            <person name="Masuho Y."/>
            <person name="Yamashita R."/>
            <person name="Nakai K."/>
            <person name="Yada T."/>
            <person name="Nakamura Y."/>
            <person name="Ohara O."/>
            <person name="Isogai T."/>
            <person name="Sugano S."/>
        </authorList>
    </citation>
    <scope>NUCLEOTIDE SEQUENCE [LARGE SCALE MRNA] (ISOFORM 2)</scope>
</reference>
<reference key="3">
    <citation type="journal article" date="2006" name="Nature">
        <title>DNA sequence of human chromosome 17 and analysis of rearrangement in the human lineage.</title>
        <authorList>
            <person name="Zody M.C."/>
            <person name="Garber M."/>
            <person name="Adams D.J."/>
            <person name="Sharpe T."/>
            <person name="Harrow J."/>
            <person name="Lupski J.R."/>
            <person name="Nicholson C."/>
            <person name="Searle S.M."/>
            <person name="Wilming L."/>
            <person name="Young S.K."/>
            <person name="Abouelleil A."/>
            <person name="Allen N.R."/>
            <person name="Bi W."/>
            <person name="Bloom T."/>
            <person name="Borowsky M.L."/>
            <person name="Bugalter B.E."/>
            <person name="Butler J."/>
            <person name="Chang J.L."/>
            <person name="Chen C.-K."/>
            <person name="Cook A."/>
            <person name="Corum B."/>
            <person name="Cuomo C.A."/>
            <person name="de Jong P.J."/>
            <person name="DeCaprio D."/>
            <person name="Dewar K."/>
            <person name="FitzGerald M."/>
            <person name="Gilbert J."/>
            <person name="Gibson R."/>
            <person name="Gnerre S."/>
            <person name="Goldstein S."/>
            <person name="Grafham D.V."/>
            <person name="Grocock R."/>
            <person name="Hafez N."/>
            <person name="Hagopian D.S."/>
            <person name="Hart E."/>
            <person name="Norman C.H."/>
            <person name="Humphray S."/>
            <person name="Jaffe D.B."/>
            <person name="Jones M."/>
            <person name="Kamal M."/>
            <person name="Khodiyar V.K."/>
            <person name="LaButti K."/>
            <person name="Laird G."/>
            <person name="Lehoczky J."/>
            <person name="Liu X."/>
            <person name="Lokyitsang T."/>
            <person name="Loveland J."/>
            <person name="Lui A."/>
            <person name="Macdonald P."/>
            <person name="Major J.E."/>
            <person name="Matthews L."/>
            <person name="Mauceli E."/>
            <person name="McCarroll S.A."/>
            <person name="Mihalev A.H."/>
            <person name="Mudge J."/>
            <person name="Nguyen C."/>
            <person name="Nicol R."/>
            <person name="O'Leary S.B."/>
            <person name="Osoegawa K."/>
            <person name="Schwartz D.C."/>
            <person name="Shaw-Smith C."/>
            <person name="Stankiewicz P."/>
            <person name="Steward C."/>
            <person name="Swarbreck D."/>
            <person name="Venkataraman V."/>
            <person name="Whittaker C.A."/>
            <person name="Yang X."/>
            <person name="Zimmer A.R."/>
            <person name="Bradley A."/>
            <person name="Hubbard T."/>
            <person name="Birren B.W."/>
            <person name="Rogers J."/>
            <person name="Lander E.S."/>
            <person name="Nusbaum C."/>
        </authorList>
    </citation>
    <scope>NUCLEOTIDE SEQUENCE [LARGE SCALE GENOMIC DNA]</scope>
</reference>
<reference key="4">
    <citation type="journal article" date="2004" name="Genome Res.">
        <title>The status, quality, and expansion of the NIH full-length cDNA project: the Mammalian Gene Collection (MGC).</title>
        <authorList>
            <consortium name="The MGC Project Team"/>
        </authorList>
    </citation>
    <scope>NUCLEOTIDE SEQUENCE [LARGE SCALE MRNA] (ISOFORM 1)</scope>
    <scope>VARIANTS GLY-32 AND TYR-124</scope>
    <source>
        <tissue>Eye</tissue>
        <tissue>Muscle</tissue>
    </source>
</reference>
<reference key="5">
    <citation type="journal article" date="2004" name="Biochemistry">
        <title>Alpha-conotoxins ImI and ImII target distinct regions of the human alpha7 nicotinic acetylcholine receptor and distinguish human nicotinic receptor subtypes.</title>
        <authorList>
            <person name="Ellison M."/>
            <person name="Gao F."/>
            <person name="Wang H.L."/>
            <person name="Sine S.M."/>
            <person name="McIntosh J.M."/>
            <person name="Olivera B.M."/>
        </authorList>
    </citation>
    <scope>SUBUNIT</scope>
</reference>
<reference key="6">
    <citation type="journal article" date="1996" name="Ann. Neurol.">
        <title>A beta-subunit mutation in the acetylcholine receptor channel gate causes severe slow-channel syndrome.</title>
        <authorList>
            <person name="Gomez C.M."/>
            <person name="Maselli R."/>
            <person name="Gammack J."/>
            <person name="Lasalde J."/>
            <person name="Tamamizu S."/>
            <person name="Cornblath D.R."/>
            <person name="Lehar M."/>
            <person name="McNamee M."/>
            <person name="Kuncl R.W."/>
        </authorList>
    </citation>
    <scope>VARIANT CMS2A MET-285</scope>
</reference>
<reference key="7">
    <citation type="journal article" date="1996" name="Hum. Mol. Genet.">
        <title>New mutations in acetylcholine receptor subunit genes reveal heterogeneity in the slow-channel congenital myasthenic syndrome.</title>
        <authorList>
            <person name="Engel A.G."/>
            <person name="Ohno K."/>
            <person name="Milone M."/>
            <person name="Wang H.-L."/>
            <person name="Nakano S."/>
            <person name="Bouzat C."/>
            <person name="Pruitt J.N. II"/>
            <person name="Hutchinson D.O."/>
            <person name="Brengman J.M."/>
            <person name="Bren N."/>
            <person name="Sieb J.P."/>
            <person name="Sine S.M."/>
        </authorList>
    </citation>
    <scope>VARIANT CMS2A MET-289</scope>
</reference>
<reference key="8">
    <citation type="journal article" date="1999" name="J. Clin. Invest.">
        <title>Mutation causing congenital myasthenia reveals acetylcholine receptor beta/delta subunit interaction essential for assembly.</title>
        <authorList>
            <person name="Quiram P.A."/>
            <person name="Ohno K."/>
            <person name="Milone M."/>
            <person name="Patterson M.C."/>
            <person name="Pruitt J.N. II"/>
            <person name="Brengman J.M."/>
            <person name="Sine S.M."/>
            <person name="Engel A.G."/>
        </authorList>
    </citation>
    <scope>VARIANT CMS2C 449-GLU--GLU-451 DEL</scope>
    <scope>CHARACTERIZATION OF VARIANT CMS2C 449-GLU--GLU-451 DEL</scope>
</reference>
<reference key="9">
    <citation type="journal article" date="2016" name="Hum. Mutat.">
        <title>Mutations causing slow-channel myasthenia reveal that a valine ring in the channel pore of muscle AChR is optimized for stabilizing channel gating.</title>
        <authorList>
            <person name="Shen X.M."/>
            <person name="Okuno T."/>
            <person name="Milone M."/>
            <person name="Otsuka K."/>
            <person name="Takahashi K."/>
            <person name="Komaki H."/>
            <person name="Giles E."/>
            <person name="Ohno K."/>
            <person name="Engel A.G."/>
        </authorList>
    </citation>
    <scope>VARIANT CMS2A ALA-289</scope>
    <scope>CHARACTERIZATION OF VARIANT CMS2A ALA-289</scope>
    <scope>FUNCTION</scope>
</reference>
<proteinExistence type="evidence at protein level"/>
<sequence length="501" mass="56698">MTPGALLMLLGALGAPLAPGVRGSEAEGRLREKLFSGYDSSVRPAREVGDRVRVSVGLILAQLISLNEKDEEMSTKVYLDLEWTDYRLSWDPAEHDGIDSLRITAESVWLPDVVLLNNNDGNFDVALDISVVVSSDGSVRWQPPGIYRSSCSIQVTYFPFDWQNCTMVFSSYSYDSSEVSLQTGLGPDGQGHQEIHIHEGTFIENGQWEIIHKPSRLIQPPGDPRGGREGQRQEVIFYLIIRRKPLFYLVNVIAPCILITLLAIFVFYLPPDAGEKMGLSIFALLTLTVFLLLLADKVPETSLSVPIIIKYLMFTMVLVTFSVILSVVVLNLHHRSPHTHQMPLWVRQIFIHKLPLYLRLKRPKPERDLMPEPPHCSSPGSGWGRGTDEYFIRKPPSDFLFPKPNRFQPELSAPDLRRFIDGPNRAVALLPELREVVSSISYIARQLQEQEDHDALKEDWQFVAMVVDRLFLWTFIIFTSVGTLVIFLDATYHLPPPDPFP</sequence>
<accession>P11230</accession>
<accession>B7Z5H1</accession>
<accession>Q8IZ46</accession>
<accession>Q96FB8</accession>
<dbReference type="EMBL" id="X14830">
    <property type="protein sequence ID" value="CAA32939.1"/>
    <property type="molecule type" value="mRNA"/>
</dbReference>
<dbReference type="EMBL" id="AK298938">
    <property type="protein sequence ID" value="BAH12907.1"/>
    <property type="molecule type" value="mRNA"/>
</dbReference>
<dbReference type="EMBL" id="AC113189">
    <property type="status" value="NOT_ANNOTATED_CDS"/>
    <property type="molecule type" value="Genomic_DNA"/>
</dbReference>
<dbReference type="EMBL" id="BC011371">
    <property type="protein sequence ID" value="AAH11371.1"/>
    <property type="molecule type" value="mRNA"/>
</dbReference>
<dbReference type="EMBL" id="BC023553">
    <property type="protein sequence ID" value="AAH23553.1"/>
    <property type="molecule type" value="mRNA"/>
</dbReference>
<dbReference type="CCDS" id="CCDS11106.1">
    <molecule id="P11230-1"/>
</dbReference>
<dbReference type="PIR" id="S04607">
    <property type="entry name" value="S04607"/>
</dbReference>
<dbReference type="RefSeq" id="NP_000738.2">
    <molecule id="P11230-1"/>
    <property type="nucleotide sequence ID" value="NM_000747.2"/>
</dbReference>
<dbReference type="SMR" id="P11230"/>
<dbReference type="BioGRID" id="107562">
    <property type="interactions" value="43"/>
</dbReference>
<dbReference type="ComplexPortal" id="CPX-2179">
    <property type="entry name" value="Muscle-type nicotinic acetylcholine receptor complex, alpha1-beta1-delta-gamma"/>
</dbReference>
<dbReference type="ComplexPortal" id="CPX-255">
    <property type="entry name" value="Muscle-type nicotinic acetylcholine receptor complex, alpha1-beta1-delta-epsilon"/>
</dbReference>
<dbReference type="CORUM" id="P11230"/>
<dbReference type="FunCoup" id="P11230">
    <property type="interactions" value="390"/>
</dbReference>
<dbReference type="IntAct" id="P11230">
    <property type="interactions" value="29"/>
</dbReference>
<dbReference type="STRING" id="9606.ENSP00000304290"/>
<dbReference type="BindingDB" id="P11230"/>
<dbReference type="ChEMBL" id="CHEMBL1907588"/>
<dbReference type="ChEMBL" id="CHEMBL3885508"/>
<dbReference type="ChEMBL" id="CHEMBL4106145"/>
<dbReference type="DrugCentral" id="P11230"/>
<dbReference type="TCDB" id="1.A.9.1.1">
    <property type="family name" value="the neurotransmitter receptor, cys loop, ligand-gated ion channel (lic) family"/>
</dbReference>
<dbReference type="GlyCosmos" id="P11230">
    <property type="glycosylation" value="1 site, No reported glycans"/>
</dbReference>
<dbReference type="GlyGen" id="P11230">
    <property type="glycosylation" value="1 site"/>
</dbReference>
<dbReference type="iPTMnet" id="P11230"/>
<dbReference type="PhosphoSitePlus" id="P11230"/>
<dbReference type="BioMuta" id="CHRNB1"/>
<dbReference type="DMDM" id="21903373"/>
<dbReference type="MassIVE" id="P11230"/>
<dbReference type="PaxDb" id="9606-ENSP00000304290"/>
<dbReference type="PeptideAtlas" id="P11230"/>
<dbReference type="ProteomicsDB" id="52725">
    <molecule id="P11230-1"/>
</dbReference>
<dbReference type="ProteomicsDB" id="6694"/>
<dbReference type="ABCD" id="P11230">
    <property type="antibodies" value="3 sequenced antibodies"/>
</dbReference>
<dbReference type="Antibodypedia" id="992">
    <property type="antibodies" value="257 antibodies from 34 providers"/>
</dbReference>
<dbReference type="DNASU" id="1140"/>
<dbReference type="Ensembl" id="ENST00000306071.7">
    <molecule id="P11230-1"/>
    <property type="protein sequence ID" value="ENSP00000304290.2"/>
    <property type="gene ID" value="ENSG00000170175.11"/>
</dbReference>
<dbReference type="Ensembl" id="ENST00000536404.6">
    <molecule id="P11230-2"/>
    <property type="protein sequence ID" value="ENSP00000439209.2"/>
    <property type="gene ID" value="ENSG00000170175.11"/>
</dbReference>
<dbReference type="Ensembl" id="ENST00000639692.2">
    <molecule id="P11230-1"/>
    <property type="protein sequence ID" value="ENSP00000492221.1"/>
    <property type="gene ID" value="ENSG00000283946.2"/>
</dbReference>
<dbReference type="Ensembl" id="ENST00000639993.1">
    <molecule id="P11230-2"/>
    <property type="protein sequence ID" value="ENSP00000491113.1"/>
    <property type="gene ID" value="ENSG00000283946.2"/>
</dbReference>
<dbReference type="GeneID" id="1140"/>
<dbReference type="KEGG" id="hsa:1140"/>
<dbReference type="MANE-Select" id="ENST00000306071.7">
    <property type="protein sequence ID" value="ENSP00000304290.2"/>
    <property type="RefSeq nucleotide sequence ID" value="NM_000747.3"/>
    <property type="RefSeq protein sequence ID" value="NP_000738.2"/>
</dbReference>
<dbReference type="UCSC" id="uc002ghb.4">
    <molecule id="P11230-1"/>
    <property type="organism name" value="human"/>
</dbReference>
<dbReference type="AGR" id="HGNC:1961"/>
<dbReference type="CTD" id="1140"/>
<dbReference type="DisGeNET" id="1140"/>
<dbReference type="GeneCards" id="CHRNB1"/>
<dbReference type="GeneReviews" id="CHRNB1"/>
<dbReference type="HGNC" id="HGNC:1961">
    <property type="gene designation" value="CHRNB1"/>
</dbReference>
<dbReference type="HPA" id="ENSG00000170175">
    <property type="expression patterns" value="Tissue enhanced (skeletal muscle, tongue)"/>
</dbReference>
<dbReference type="MalaCards" id="CHRNB1"/>
<dbReference type="MIM" id="100710">
    <property type="type" value="gene"/>
</dbReference>
<dbReference type="MIM" id="616313">
    <property type="type" value="phenotype"/>
</dbReference>
<dbReference type="MIM" id="616314">
    <property type="type" value="phenotype"/>
</dbReference>
<dbReference type="neXtProt" id="NX_P11230"/>
<dbReference type="OpenTargets" id="ENSG00000170175"/>
<dbReference type="Orphanet" id="98913">
    <property type="disease" value="Postsynaptic congenital myasthenic syndromes"/>
</dbReference>
<dbReference type="PharmGKB" id="PA26494"/>
<dbReference type="VEuPathDB" id="HostDB:ENSG00000170175"/>
<dbReference type="eggNOG" id="KOG3645">
    <property type="taxonomic scope" value="Eukaryota"/>
</dbReference>
<dbReference type="GeneTree" id="ENSGT00940000158661"/>
<dbReference type="HOGENOM" id="CLU_018074_1_4_1"/>
<dbReference type="InParanoid" id="P11230"/>
<dbReference type="OMA" id="PCILITV"/>
<dbReference type="OrthoDB" id="5975154at2759"/>
<dbReference type="PAN-GO" id="P11230">
    <property type="GO annotations" value="9 GO annotations based on evolutionary models"/>
</dbReference>
<dbReference type="PhylomeDB" id="P11230"/>
<dbReference type="TreeFam" id="TF315605"/>
<dbReference type="PathwayCommons" id="P11230"/>
<dbReference type="SignaLink" id="P11230"/>
<dbReference type="BioGRID-ORCS" id="1140">
    <property type="hits" value="14 hits in 1156 CRISPR screens"/>
</dbReference>
<dbReference type="CD-CODE" id="3EAB04FE">
    <property type="entry name" value="Rapsn condensate"/>
</dbReference>
<dbReference type="ChiTaRS" id="CHRNB1">
    <property type="organism name" value="human"/>
</dbReference>
<dbReference type="GeneWiki" id="CHRNB1"/>
<dbReference type="GenomeRNAi" id="1140"/>
<dbReference type="Pharos" id="P11230">
    <property type="development level" value="Tclin"/>
</dbReference>
<dbReference type="PRO" id="PR:P11230"/>
<dbReference type="Proteomes" id="UP000005640">
    <property type="component" value="Chromosome 17"/>
</dbReference>
<dbReference type="RNAct" id="P11230">
    <property type="molecule type" value="protein"/>
</dbReference>
<dbReference type="Bgee" id="ENSG00000170175">
    <property type="expression patterns" value="Expressed in gastrocnemius and 99 other cell types or tissues"/>
</dbReference>
<dbReference type="ExpressionAtlas" id="P11230">
    <property type="expression patterns" value="baseline and differential"/>
</dbReference>
<dbReference type="GO" id="GO:0005892">
    <property type="term" value="C:acetylcholine-gated channel complex"/>
    <property type="evidence" value="ECO:0000315"/>
    <property type="project" value="UniProtKB"/>
</dbReference>
<dbReference type="GO" id="GO:0031594">
    <property type="term" value="C:neuromuscular junction"/>
    <property type="evidence" value="ECO:0000314"/>
    <property type="project" value="SynGO"/>
</dbReference>
<dbReference type="GO" id="GO:0043005">
    <property type="term" value="C:neuron projection"/>
    <property type="evidence" value="ECO:0000318"/>
    <property type="project" value="GO_Central"/>
</dbReference>
<dbReference type="GO" id="GO:0005886">
    <property type="term" value="C:plasma membrane"/>
    <property type="evidence" value="ECO:0000318"/>
    <property type="project" value="GO_Central"/>
</dbReference>
<dbReference type="GO" id="GO:0099634">
    <property type="term" value="C:postsynaptic specialization membrane"/>
    <property type="evidence" value="ECO:0007669"/>
    <property type="project" value="Ensembl"/>
</dbReference>
<dbReference type="GO" id="GO:0045202">
    <property type="term" value="C:synapse"/>
    <property type="evidence" value="ECO:0000315"/>
    <property type="project" value="UniProtKB"/>
</dbReference>
<dbReference type="GO" id="GO:0042166">
    <property type="term" value="F:acetylcholine binding"/>
    <property type="evidence" value="ECO:0000250"/>
    <property type="project" value="UniProtKB"/>
</dbReference>
<dbReference type="GO" id="GO:0022848">
    <property type="term" value="F:acetylcholine-gated monoatomic cation-selective channel activity"/>
    <property type="evidence" value="ECO:0000318"/>
    <property type="project" value="GO_Central"/>
</dbReference>
<dbReference type="GO" id="GO:0015267">
    <property type="term" value="F:channel activity"/>
    <property type="evidence" value="ECO:0000315"/>
    <property type="project" value="UniProtKB"/>
</dbReference>
<dbReference type="GO" id="GO:0015276">
    <property type="term" value="F:ligand-gated monoatomic ion channel activity"/>
    <property type="evidence" value="ECO:0000250"/>
    <property type="project" value="UniProtKB"/>
</dbReference>
<dbReference type="GO" id="GO:0004888">
    <property type="term" value="F:transmembrane signaling receptor activity"/>
    <property type="evidence" value="ECO:0007669"/>
    <property type="project" value="InterPro"/>
</dbReference>
<dbReference type="GO" id="GO:1904315">
    <property type="term" value="F:transmitter-gated monoatomic ion channel activity involved in regulation of postsynaptic membrane potential"/>
    <property type="evidence" value="ECO:0000314"/>
    <property type="project" value="SynGO"/>
</dbReference>
<dbReference type="GO" id="GO:0095500">
    <property type="term" value="P:acetylcholine receptor signaling pathway"/>
    <property type="evidence" value="ECO:0000318"/>
    <property type="project" value="GO_Central"/>
</dbReference>
<dbReference type="GO" id="GO:0035095">
    <property type="term" value="P:behavioral response to nicotine"/>
    <property type="evidence" value="ECO:0000315"/>
    <property type="project" value="UniProtKB"/>
</dbReference>
<dbReference type="GO" id="GO:0007268">
    <property type="term" value="P:chemical synaptic transmission"/>
    <property type="evidence" value="ECO:0000318"/>
    <property type="project" value="GO_Central"/>
</dbReference>
<dbReference type="GO" id="GO:0051899">
    <property type="term" value="P:membrane depolarization"/>
    <property type="evidence" value="ECO:0000318"/>
    <property type="project" value="GO_Central"/>
</dbReference>
<dbReference type="GO" id="GO:0006812">
    <property type="term" value="P:monoatomic cation transport"/>
    <property type="evidence" value="ECO:0000315"/>
    <property type="project" value="UniProtKB"/>
</dbReference>
<dbReference type="GO" id="GO:0034220">
    <property type="term" value="P:monoatomic ion transmembrane transport"/>
    <property type="evidence" value="ECO:0000318"/>
    <property type="project" value="GO_Central"/>
</dbReference>
<dbReference type="GO" id="GO:0055001">
    <property type="term" value="P:muscle cell development"/>
    <property type="evidence" value="ECO:0000315"/>
    <property type="project" value="UniProtKB"/>
</dbReference>
<dbReference type="GO" id="GO:0006936">
    <property type="term" value="P:muscle contraction"/>
    <property type="evidence" value="ECO:0000315"/>
    <property type="project" value="UniProtKB"/>
</dbReference>
<dbReference type="GO" id="GO:0050877">
    <property type="term" value="P:nervous system process"/>
    <property type="evidence" value="ECO:0000315"/>
    <property type="project" value="UniProtKB"/>
</dbReference>
<dbReference type="GO" id="GO:0007274">
    <property type="term" value="P:neuromuscular synaptic transmission"/>
    <property type="evidence" value="ECO:0000315"/>
    <property type="project" value="UniProtKB"/>
</dbReference>
<dbReference type="GO" id="GO:0001941">
    <property type="term" value="P:postsynaptic membrane organization"/>
    <property type="evidence" value="ECO:0000315"/>
    <property type="project" value="UniProtKB"/>
</dbReference>
<dbReference type="GO" id="GO:0042391">
    <property type="term" value="P:regulation of membrane potential"/>
    <property type="evidence" value="ECO:0000250"/>
    <property type="project" value="UniProtKB"/>
</dbReference>
<dbReference type="GO" id="GO:0007165">
    <property type="term" value="P:signal transduction"/>
    <property type="evidence" value="ECO:0000315"/>
    <property type="project" value="UniProtKB"/>
</dbReference>
<dbReference type="GO" id="GO:0003009">
    <property type="term" value="P:skeletal muscle contraction"/>
    <property type="evidence" value="ECO:0007669"/>
    <property type="project" value="Ensembl"/>
</dbReference>
<dbReference type="GO" id="GO:0007271">
    <property type="term" value="P:synaptic transmission, cholinergic"/>
    <property type="evidence" value="ECO:0000315"/>
    <property type="project" value="UniProtKB"/>
</dbReference>
<dbReference type="CDD" id="cd19024">
    <property type="entry name" value="LGIC_ECD_nAChR_B1"/>
    <property type="match status" value="1"/>
</dbReference>
<dbReference type="CDD" id="cd19064">
    <property type="entry name" value="LGIC_TM_nAChR"/>
    <property type="match status" value="1"/>
</dbReference>
<dbReference type="FunFam" id="1.20.58.390:FF:000026">
    <property type="entry name" value="Cholinergic receptor nicotinic beta 1 subunit"/>
    <property type="match status" value="1"/>
</dbReference>
<dbReference type="FunFam" id="2.70.170.10:FF:000012">
    <property type="entry name" value="Nicotinic acetylcholine receptor subunit gamma"/>
    <property type="match status" value="1"/>
</dbReference>
<dbReference type="Gene3D" id="2.70.170.10">
    <property type="entry name" value="Neurotransmitter-gated ion-channel ligand-binding domain"/>
    <property type="match status" value="1"/>
</dbReference>
<dbReference type="Gene3D" id="1.20.58.390">
    <property type="entry name" value="Neurotransmitter-gated ion-channel transmembrane domain"/>
    <property type="match status" value="2"/>
</dbReference>
<dbReference type="InterPro" id="IPR006202">
    <property type="entry name" value="Neur_chan_lig-bd"/>
</dbReference>
<dbReference type="InterPro" id="IPR036734">
    <property type="entry name" value="Neur_chan_lig-bd_sf"/>
</dbReference>
<dbReference type="InterPro" id="IPR006201">
    <property type="entry name" value="Neur_channel"/>
</dbReference>
<dbReference type="InterPro" id="IPR036719">
    <property type="entry name" value="Neuro-gated_channel_TM_sf"/>
</dbReference>
<dbReference type="InterPro" id="IPR038050">
    <property type="entry name" value="Neuro_actylchol_rec"/>
</dbReference>
<dbReference type="InterPro" id="IPR006029">
    <property type="entry name" value="Neurotrans-gated_channel_TM"/>
</dbReference>
<dbReference type="InterPro" id="IPR018000">
    <property type="entry name" value="Neurotransmitter_ion_chnl_CS"/>
</dbReference>
<dbReference type="InterPro" id="IPR002394">
    <property type="entry name" value="Nicotinic_acetylcholine_rcpt"/>
</dbReference>
<dbReference type="NCBIfam" id="TIGR00860">
    <property type="entry name" value="LIC"/>
    <property type="match status" value="1"/>
</dbReference>
<dbReference type="PANTHER" id="PTHR18945">
    <property type="entry name" value="NEUROTRANSMITTER GATED ION CHANNEL"/>
    <property type="match status" value="1"/>
</dbReference>
<dbReference type="Pfam" id="PF02931">
    <property type="entry name" value="Neur_chan_LBD"/>
    <property type="match status" value="1"/>
</dbReference>
<dbReference type="Pfam" id="PF02932">
    <property type="entry name" value="Neur_chan_memb"/>
    <property type="match status" value="1"/>
</dbReference>
<dbReference type="PRINTS" id="PR00254">
    <property type="entry name" value="NICOTINICR"/>
</dbReference>
<dbReference type="PRINTS" id="PR00252">
    <property type="entry name" value="NRIONCHANNEL"/>
</dbReference>
<dbReference type="SUPFAM" id="SSF90112">
    <property type="entry name" value="Neurotransmitter-gated ion-channel transmembrane pore"/>
    <property type="match status" value="1"/>
</dbReference>
<dbReference type="SUPFAM" id="SSF63712">
    <property type="entry name" value="Nicotinic receptor ligand binding domain-like"/>
    <property type="match status" value="1"/>
</dbReference>
<dbReference type="PROSITE" id="PS00236">
    <property type="entry name" value="NEUROTR_ION_CHANNEL"/>
    <property type="match status" value="1"/>
</dbReference>
<name>ACHB_HUMAN</name>
<protein>
    <recommendedName>
        <fullName evidence="11">Acetylcholine receptor subunit beta</fullName>
    </recommendedName>
</protein>
<feature type="signal peptide">
    <location>
        <begin position="1"/>
        <end position="23"/>
    </location>
</feature>
<feature type="chain" id="PRO_0000000315" description="Acetylcholine receptor subunit beta">
    <location>
        <begin position="24"/>
        <end position="501"/>
    </location>
</feature>
<feature type="topological domain" description="Extracellular" evidence="3">
    <location>
        <begin position="24"/>
        <end position="244"/>
    </location>
</feature>
<feature type="transmembrane region" description="Helical" evidence="3">
    <location>
        <begin position="245"/>
        <end position="269"/>
    </location>
</feature>
<feature type="transmembrane region" description="Helical" evidence="3">
    <location>
        <begin position="277"/>
        <end position="295"/>
    </location>
</feature>
<feature type="transmembrane region" description="Helical" evidence="3">
    <location>
        <begin position="311"/>
        <end position="332"/>
    </location>
</feature>
<feature type="topological domain" description="Cytoplasmic" evidence="3">
    <location>
        <begin position="333"/>
        <end position="469"/>
    </location>
</feature>
<feature type="transmembrane region" description="Helical" evidence="3">
    <location>
        <begin position="470"/>
        <end position="488"/>
    </location>
</feature>
<feature type="modified residue" description="Phosphotyrosine; by Tyr-kinases" evidence="1">
    <location>
        <position position="390"/>
    </location>
</feature>
<feature type="glycosylation site" description="N-linked (GlcNAc...) asparagine" evidence="3">
    <location>
        <position position="164"/>
    </location>
</feature>
<feature type="disulfide bond" evidence="1">
    <location>
        <begin position="151"/>
        <end position="165"/>
    </location>
</feature>
<feature type="splice variant" id="VSP_056675" description="In isoform 2." evidence="10">
    <location>
        <begin position="1"/>
        <end position="72"/>
    </location>
</feature>
<feature type="sequence variant" id="VAR_048169" description="In dbSNP:rs17856697." evidence="5">
    <original>E</original>
    <variation>G</variation>
    <location>
        <position position="32"/>
    </location>
</feature>
<feature type="sequence variant" id="VAR_070842" description="In dbSNP:rs17856698." evidence="5">
    <original>D</original>
    <variation>Y</variation>
    <location>
        <position position="124"/>
    </location>
</feature>
<feature type="sequence variant" id="VAR_000287" description="In CMS2A; dbSNP:rs137852811." evidence="8">
    <original>L</original>
    <variation>M</variation>
    <location>
        <position position="285"/>
    </location>
</feature>
<feature type="sequence variant" id="VAR_077363" description="In CMS2A; slow-channel mutation; increases gating equilibrium constant by 33-fold, owing to increased opening rate and decreased closing rate; no effect on the choline dissociation rate constant." evidence="7">
    <original>V</original>
    <variation>A</variation>
    <location>
        <position position="289"/>
    </location>
</feature>
<feature type="sequence variant" id="VAR_000288" description="In CMS2A; dbSNP:rs137852810." evidence="9">
    <original>V</original>
    <variation>M</variation>
    <location>
        <position position="289"/>
    </location>
</feature>
<feature type="sequence variant" id="VAR_017494" description="In CMS2C; impairs AChR assembly by disrupting a specific interaction between beta and delta subunits." evidence="4">
    <location>
        <begin position="449"/>
        <end position="451"/>
    </location>
</feature>
<feature type="sequence conflict" description="In Ref. 1; CAA32939." evidence="11" ref="1">
    <original>A</original>
    <variation>P</variation>
    <location>
        <position position="15"/>
    </location>
</feature>
<feature type="sequence conflict" description="In Ref. 1; CAA32939." evidence="11" ref="1">
    <original>I</original>
    <variation>N</variation>
    <location>
        <position position="210"/>
    </location>
</feature>
<organism>
    <name type="scientific">Homo sapiens</name>
    <name type="common">Human</name>
    <dbReference type="NCBI Taxonomy" id="9606"/>
    <lineage>
        <taxon>Eukaryota</taxon>
        <taxon>Metazoa</taxon>
        <taxon>Chordata</taxon>
        <taxon>Craniata</taxon>
        <taxon>Vertebrata</taxon>
        <taxon>Euteleostomi</taxon>
        <taxon>Mammalia</taxon>
        <taxon>Eutheria</taxon>
        <taxon>Euarchontoglires</taxon>
        <taxon>Primates</taxon>
        <taxon>Haplorrhini</taxon>
        <taxon>Catarrhini</taxon>
        <taxon>Hominidae</taxon>
        <taxon>Homo</taxon>
    </lineage>
</organism>
<keyword id="KW-0025">Alternative splicing</keyword>
<keyword id="KW-1003">Cell membrane</keyword>
<keyword id="KW-1004">Congenital myasthenic syndrome</keyword>
<keyword id="KW-0225">Disease variant</keyword>
<keyword id="KW-1015">Disulfide bond</keyword>
<keyword id="KW-0325">Glycoprotein</keyword>
<keyword id="KW-0407">Ion channel</keyword>
<keyword id="KW-0406">Ion transport</keyword>
<keyword id="KW-1071">Ligand-gated ion channel</keyword>
<keyword id="KW-0472">Membrane</keyword>
<keyword id="KW-0597">Phosphoprotein</keyword>
<keyword id="KW-0628">Postsynaptic cell membrane</keyword>
<keyword id="KW-0675">Receptor</keyword>
<keyword id="KW-1185">Reference proteome</keyword>
<keyword id="KW-0732">Signal</keyword>
<keyword id="KW-0770">Synapse</keyword>
<keyword id="KW-0812">Transmembrane</keyword>
<keyword id="KW-1133">Transmembrane helix</keyword>
<keyword id="KW-0813">Transport</keyword>
<evidence type="ECO:0000250" key="1"/>
<evidence type="ECO:0000250" key="2">
    <source>
        <dbReference type="UniProtKB" id="P04758"/>
    </source>
</evidence>
<evidence type="ECO:0000255" key="3"/>
<evidence type="ECO:0000269" key="4">
    <source>
    </source>
</evidence>
<evidence type="ECO:0000269" key="5">
    <source>
    </source>
</evidence>
<evidence type="ECO:0000269" key="6">
    <source>
    </source>
</evidence>
<evidence type="ECO:0000269" key="7">
    <source>
    </source>
</evidence>
<evidence type="ECO:0000269" key="8">
    <source>
    </source>
</evidence>
<evidence type="ECO:0000269" key="9">
    <source>
    </source>
</evidence>
<evidence type="ECO:0000303" key="10">
    <source>
    </source>
</evidence>
<evidence type="ECO:0000305" key="11"/>
<evidence type="ECO:0000312" key="12">
    <source>
        <dbReference type="HGNC" id="HGNC:1961"/>
    </source>
</evidence>